<keyword id="KW-0256">Endoplasmic reticulum</keyword>
<keyword id="KW-0456">Lyase</keyword>
<keyword id="KW-0472">Membrane</keyword>
<keyword id="KW-0521">NADP</keyword>
<keyword id="KW-1185">Reference proteome</keyword>
<keyword id="KW-0812">Transmembrane</keyword>
<keyword id="KW-1133">Transmembrane helix</keyword>
<accession>A2XAY1</accession>
<protein>
    <recommendedName>
        <fullName evidence="3">Very-long-chain aldehyde decarbonylase GL1-6</fullName>
        <ecNumber evidence="1">4.1.99.5</ecNumber>
    </recommendedName>
    <alternativeName>
        <fullName evidence="3">Protein GLOSSY 1-6</fullName>
    </alternativeName>
</protein>
<name>GLO16_ORYSI</name>
<comment type="function">
    <text evidence="1">Aldehyde decarbonylase involved in the conversion of aldehydes to alkanes. Core component of a very-long-chain alkane synthesis complex.</text>
</comment>
<comment type="catalytic activity">
    <reaction evidence="1">
        <text>a long-chain fatty aldehyde + 2 NADPH + O2 + H(+) = a long-chain alkane + formate + 2 NADP(+) + H2O</text>
        <dbReference type="Rhea" id="RHEA:21440"/>
        <dbReference type="ChEBI" id="CHEBI:15377"/>
        <dbReference type="ChEBI" id="CHEBI:15378"/>
        <dbReference type="ChEBI" id="CHEBI:15379"/>
        <dbReference type="ChEBI" id="CHEBI:15740"/>
        <dbReference type="ChEBI" id="CHEBI:17176"/>
        <dbReference type="ChEBI" id="CHEBI:57783"/>
        <dbReference type="ChEBI" id="CHEBI:58349"/>
        <dbReference type="ChEBI" id="CHEBI:83563"/>
        <dbReference type="EC" id="4.1.99.5"/>
    </reaction>
</comment>
<comment type="subunit">
    <text evidence="1">Homodimer.</text>
</comment>
<comment type="subcellular location">
    <subcellularLocation>
        <location evidence="1">Endoplasmic reticulum membrane</location>
        <topology evidence="1">Multi-pass membrane protein</topology>
    </subcellularLocation>
</comment>
<comment type="similarity">
    <text evidence="3">Belongs to the sterol desaturase family.</text>
</comment>
<organism>
    <name type="scientific">Oryza sativa subsp. indica</name>
    <name type="common">Rice</name>
    <dbReference type="NCBI Taxonomy" id="39946"/>
    <lineage>
        <taxon>Eukaryota</taxon>
        <taxon>Viridiplantae</taxon>
        <taxon>Streptophyta</taxon>
        <taxon>Embryophyta</taxon>
        <taxon>Tracheophyta</taxon>
        <taxon>Spermatophyta</taxon>
        <taxon>Magnoliopsida</taxon>
        <taxon>Liliopsida</taxon>
        <taxon>Poales</taxon>
        <taxon>Poaceae</taxon>
        <taxon>BOP clade</taxon>
        <taxon>Oryzoideae</taxon>
        <taxon>Oryzeae</taxon>
        <taxon>Oryzinae</taxon>
        <taxon>Oryza</taxon>
        <taxon>Oryza sativa</taxon>
    </lineage>
</organism>
<gene>
    <name evidence="3" type="primary">GL1-6</name>
    <name evidence="4" type="ORF">OsI_09413</name>
</gene>
<feature type="chain" id="PRO_0000445878" description="Very-long-chain aldehyde decarbonylase GL1-6">
    <location>
        <begin position="1"/>
        <end position="635"/>
    </location>
</feature>
<feature type="transmembrane region" description="Helical" evidence="2">
    <location>
        <begin position="46"/>
        <end position="66"/>
    </location>
</feature>
<feature type="transmembrane region" description="Helical" evidence="2">
    <location>
        <begin position="100"/>
        <end position="120"/>
    </location>
</feature>
<feature type="transmembrane region" description="Helical" evidence="2">
    <location>
        <begin position="127"/>
        <end position="147"/>
    </location>
</feature>
<feature type="transmembrane region" description="Helical" evidence="2">
    <location>
        <begin position="183"/>
        <end position="203"/>
    </location>
</feature>
<feature type="domain" description="Fatty acid hydroxylase" evidence="2">
    <location>
        <begin position="139"/>
        <end position="273"/>
    </location>
</feature>
<reference key="1">
    <citation type="journal article" date="2005" name="PLoS Biol.">
        <title>The genomes of Oryza sativa: a history of duplications.</title>
        <authorList>
            <person name="Yu J."/>
            <person name="Wang J."/>
            <person name="Lin W."/>
            <person name="Li S."/>
            <person name="Li H."/>
            <person name="Zhou J."/>
            <person name="Ni P."/>
            <person name="Dong W."/>
            <person name="Hu S."/>
            <person name="Zeng C."/>
            <person name="Zhang J."/>
            <person name="Zhang Y."/>
            <person name="Li R."/>
            <person name="Xu Z."/>
            <person name="Li S."/>
            <person name="Li X."/>
            <person name="Zheng H."/>
            <person name="Cong L."/>
            <person name="Lin L."/>
            <person name="Yin J."/>
            <person name="Geng J."/>
            <person name="Li G."/>
            <person name="Shi J."/>
            <person name="Liu J."/>
            <person name="Lv H."/>
            <person name="Li J."/>
            <person name="Wang J."/>
            <person name="Deng Y."/>
            <person name="Ran L."/>
            <person name="Shi X."/>
            <person name="Wang X."/>
            <person name="Wu Q."/>
            <person name="Li C."/>
            <person name="Ren X."/>
            <person name="Wang J."/>
            <person name="Wang X."/>
            <person name="Li D."/>
            <person name="Liu D."/>
            <person name="Zhang X."/>
            <person name="Ji Z."/>
            <person name="Zhao W."/>
            <person name="Sun Y."/>
            <person name="Zhang Z."/>
            <person name="Bao J."/>
            <person name="Han Y."/>
            <person name="Dong L."/>
            <person name="Ji J."/>
            <person name="Chen P."/>
            <person name="Wu S."/>
            <person name="Liu J."/>
            <person name="Xiao Y."/>
            <person name="Bu D."/>
            <person name="Tan J."/>
            <person name="Yang L."/>
            <person name="Ye C."/>
            <person name="Zhang J."/>
            <person name="Xu J."/>
            <person name="Zhou Y."/>
            <person name="Yu Y."/>
            <person name="Zhang B."/>
            <person name="Zhuang S."/>
            <person name="Wei H."/>
            <person name="Liu B."/>
            <person name="Lei M."/>
            <person name="Yu H."/>
            <person name="Li Y."/>
            <person name="Xu H."/>
            <person name="Wei S."/>
            <person name="He X."/>
            <person name="Fang L."/>
            <person name="Zhang Z."/>
            <person name="Zhang Y."/>
            <person name="Huang X."/>
            <person name="Su Z."/>
            <person name="Tong W."/>
            <person name="Li J."/>
            <person name="Tong Z."/>
            <person name="Li S."/>
            <person name="Ye J."/>
            <person name="Wang L."/>
            <person name="Fang L."/>
            <person name="Lei T."/>
            <person name="Chen C.-S."/>
            <person name="Chen H.-C."/>
            <person name="Xu Z."/>
            <person name="Li H."/>
            <person name="Huang H."/>
            <person name="Zhang F."/>
            <person name="Xu H."/>
            <person name="Li N."/>
            <person name="Zhao C."/>
            <person name="Li S."/>
            <person name="Dong L."/>
            <person name="Huang Y."/>
            <person name="Li L."/>
            <person name="Xi Y."/>
            <person name="Qi Q."/>
            <person name="Li W."/>
            <person name="Zhang B."/>
            <person name="Hu W."/>
            <person name="Zhang Y."/>
            <person name="Tian X."/>
            <person name="Jiao Y."/>
            <person name="Liang X."/>
            <person name="Jin J."/>
            <person name="Gao L."/>
            <person name="Zheng W."/>
            <person name="Hao B."/>
            <person name="Liu S.-M."/>
            <person name="Wang W."/>
            <person name="Yuan L."/>
            <person name="Cao M."/>
            <person name="McDermott J."/>
            <person name="Samudrala R."/>
            <person name="Wang J."/>
            <person name="Wong G.K.-S."/>
            <person name="Yang H."/>
        </authorList>
    </citation>
    <scope>NUCLEOTIDE SEQUENCE [LARGE SCALE GENOMIC DNA]</scope>
    <source>
        <strain>cv. 93-11</strain>
    </source>
</reference>
<dbReference type="EC" id="4.1.99.5" evidence="1"/>
<dbReference type="EMBL" id="CM000127">
    <property type="protein sequence ID" value="EAY87991.1"/>
    <property type="molecule type" value="Genomic_DNA"/>
</dbReference>
<dbReference type="STRING" id="39946.A2XAY1"/>
<dbReference type="EnsemblPlants" id="BGIOSGA005375-TA">
    <property type="protein sequence ID" value="BGIOSGA005375-PA"/>
    <property type="gene ID" value="BGIOSGA005375"/>
</dbReference>
<dbReference type="Gramene" id="BGIOSGA005375-TA">
    <property type="protein sequence ID" value="BGIOSGA005375-PA"/>
    <property type="gene ID" value="BGIOSGA005375"/>
</dbReference>
<dbReference type="HOGENOM" id="CLU_017842_1_0_1"/>
<dbReference type="OMA" id="VCENWLP"/>
<dbReference type="Proteomes" id="UP000007015">
    <property type="component" value="Chromosome 2"/>
</dbReference>
<dbReference type="GO" id="GO:0005789">
    <property type="term" value="C:endoplasmic reticulum membrane"/>
    <property type="evidence" value="ECO:0007669"/>
    <property type="project" value="UniProtKB-SubCell"/>
</dbReference>
<dbReference type="GO" id="GO:0071771">
    <property type="term" value="F:aldehyde oxygenase (deformylating) activity"/>
    <property type="evidence" value="ECO:0007669"/>
    <property type="project" value="UniProtKB-EC"/>
</dbReference>
<dbReference type="GO" id="GO:0005506">
    <property type="term" value="F:iron ion binding"/>
    <property type="evidence" value="ECO:0007669"/>
    <property type="project" value="InterPro"/>
</dbReference>
<dbReference type="GO" id="GO:0016491">
    <property type="term" value="F:oxidoreductase activity"/>
    <property type="evidence" value="ECO:0007669"/>
    <property type="project" value="InterPro"/>
</dbReference>
<dbReference type="GO" id="GO:0008610">
    <property type="term" value="P:lipid biosynthetic process"/>
    <property type="evidence" value="ECO:0007669"/>
    <property type="project" value="InterPro"/>
</dbReference>
<dbReference type="GO" id="GO:0009409">
    <property type="term" value="P:response to cold"/>
    <property type="evidence" value="ECO:0007669"/>
    <property type="project" value="EnsemblPlants"/>
</dbReference>
<dbReference type="GO" id="GO:0009651">
    <property type="term" value="P:response to salt stress"/>
    <property type="evidence" value="ECO:0007669"/>
    <property type="project" value="EnsemblPlants"/>
</dbReference>
<dbReference type="GO" id="GO:0009414">
    <property type="term" value="P:response to water deprivation"/>
    <property type="evidence" value="ECO:0007669"/>
    <property type="project" value="EnsemblPlants"/>
</dbReference>
<dbReference type="InterPro" id="IPR021940">
    <property type="entry name" value="CER1-like_C"/>
</dbReference>
<dbReference type="InterPro" id="IPR006694">
    <property type="entry name" value="Fatty_acid_hydroxylase"/>
</dbReference>
<dbReference type="InterPro" id="IPR050307">
    <property type="entry name" value="Sterol_Desaturase_Related"/>
</dbReference>
<dbReference type="PANTHER" id="PTHR11863">
    <property type="entry name" value="STEROL DESATURASE"/>
    <property type="match status" value="1"/>
</dbReference>
<dbReference type="Pfam" id="PF12076">
    <property type="entry name" value="CER1-like_C"/>
    <property type="match status" value="1"/>
</dbReference>
<dbReference type="Pfam" id="PF04116">
    <property type="entry name" value="FA_hydroxylase"/>
    <property type="match status" value="1"/>
</dbReference>
<evidence type="ECO:0000250" key="1">
    <source>
        <dbReference type="UniProtKB" id="F4HVY0"/>
    </source>
</evidence>
<evidence type="ECO:0000255" key="2"/>
<evidence type="ECO:0000305" key="3"/>
<evidence type="ECO:0000312" key="4">
    <source>
        <dbReference type="EMBL" id="EAY87991.1"/>
    </source>
</evidence>
<sequence>MASKPGPLTQWPWNNLGNYKYALVAPSAAYSTYRFVTASSAAERDLLNFMVFPMLLLRLLYGQLWITVSRHQTARSKHKIVNKSLDFEQIDRERNWDDQIILTALVFYLVSATMPQAQVAPWWSTKGMVVTAVLHAGPVEFLYYWLHRALHHHWLYARYHSHHHASIVTEPITSVIHPFAEEVVYFVLLAIPILSTVATGTVSVVTANGYLVYIDFMNYLGHCNFELVPKCLFHVFPPLKYLLYTPSFHSLHHTQFRTNYSLFMPVYDYIYGTTDKSSDELYERTLQGRDEAAWRPDVVHLTHLTAPESVFHNRLGFAAVASNPLGAAASGHLLRAASAVASPLLSLFASTFRSEANRLDKLNIETWVIPRFTSHYTSKSDGYKVSRLIEKAVSDAEASGARVLTLGLLNQGYDLNRNGELYVVRKPSLKTKIVDGTSLAVAAVLNMIPQGTKDVLLLGNANKISLVLTLSLCKREIQVRMVNKELYECLKQQLQPEMQEHLVLSRSYSSKVWLVGDGVTDEEQMKAQKGSHFVPYSQFPPNKARNDCVYHCTPALLVPESFENLHVCENWLPRRVMSAWRAAGIVHALEKWDGHECGGRVTGVQKAWSAALARGFRPYDDHHHPGITHDGRGGL</sequence>
<proteinExistence type="inferred from homology"/>